<protein>
    <recommendedName>
        <fullName evidence="1">DNA mismatch repair protein MutS</fullName>
    </recommendedName>
</protein>
<gene>
    <name evidence="1" type="primary">mutS</name>
    <name type="ordered locus">SPC_2951</name>
</gene>
<comment type="function">
    <text evidence="1">This protein is involved in the repair of mismatches in DNA. It is possible that it carries out the mismatch recognition step. This protein has a weak ATPase activity.</text>
</comment>
<comment type="similarity">
    <text evidence="1">Belongs to the DNA mismatch repair MutS family.</text>
</comment>
<reference key="1">
    <citation type="journal article" date="2009" name="PLoS ONE">
        <title>Salmonella paratyphi C: genetic divergence from Salmonella choleraesuis and pathogenic convergence with Salmonella typhi.</title>
        <authorList>
            <person name="Liu W.-Q."/>
            <person name="Feng Y."/>
            <person name="Wang Y."/>
            <person name="Zou Q.-H."/>
            <person name="Chen F."/>
            <person name="Guo J.-T."/>
            <person name="Peng Y.-H."/>
            <person name="Jin Y."/>
            <person name="Li Y.-G."/>
            <person name="Hu S.-N."/>
            <person name="Johnston R.N."/>
            <person name="Liu G.-R."/>
            <person name="Liu S.-L."/>
        </authorList>
    </citation>
    <scope>NUCLEOTIDE SEQUENCE [LARGE SCALE GENOMIC DNA]</scope>
    <source>
        <strain>RKS4594</strain>
    </source>
</reference>
<sequence length="855" mass="95391">MNESFDKDFSNHTPMMQQYLKLKAQHPEILLFYRMGDFYELFYDDAKRASQLLDISLTKRGASAGEPIPMAGIPHHAVENYLAKLVNQGESVAICEQIGDPATSKGPVERKVVRIVTPGTISDEALLQERQDNLLAAIWQDGKGYGYATLDISSGRFRLSEPADRETMAAELQRTNPAELLYAEDFAEMALIEGRRGLRRRPLWEFEIDTARQQLNLQFGTRDLVGFGVENASRGLCAAGCLLQYVKDTQRTSLPHIRSITMERQQDSIIMDAATRRNLEITQNLAGGVENTLAAVLDCTVTPMGSRMLKRWLHMPVRNTDILRERQQTIGALQDTVSELQPVLRQVGDLERILARLALRTARPRDLARMRHAFQQLPELHAQLETVDSAPVQALRKKMGDFAEPRDLLERAIIDAPPVLVRDGGVIAPGYHEELDEWRALADGATDYLDRLEIRERERTGLDTLKVGYNAVHGYYIQISRGQSHLAPINYVRRQTLKNAERYIIPELKEYEDKVLTSKGKALALEKQLYDELFDLLLPHLADLQQSANALAELDVLVNLAERAWTLNYTCPTFTDKPGIRITEGRHPVVEQVLNEPFIANPLNLSPQRRMLIITGPNMGGKSTYMRQTALIALLAYIGSYVPAQNVEIGPIDRIFTRVGAADDLASGRSTFMVEMTETANILHNATENSLVLMDEIGRGTSTYDGLSLAWACAENLANKIKALTLFATHYFELTQLPEKMEGVANVHLDALEHGDTIAFMHSVQDGAASKSYGLAVAALAGVPKEVIKRARQKLRELESISPNAAATQVDGTQMSLLAAPEETSPAVEALENLDPDSLTPRQALEWIYRLKSLV</sequence>
<feature type="chain" id="PRO_1000118690" description="DNA mismatch repair protein MutS">
    <location>
        <begin position="1"/>
        <end position="855"/>
    </location>
</feature>
<feature type="binding site" evidence="1">
    <location>
        <begin position="616"/>
        <end position="623"/>
    </location>
    <ligand>
        <name>ATP</name>
        <dbReference type="ChEBI" id="CHEBI:30616"/>
    </ligand>
</feature>
<evidence type="ECO:0000255" key="1">
    <source>
        <dbReference type="HAMAP-Rule" id="MF_00096"/>
    </source>
</evidence>
<dbReference type="EMBL" id="CP000857">
    <property type="protein sequence ID" value="ACN47044.1"/>
    <property type="molecule type" value="Genomic_DNA"/>
</dbReference>
<dbReference type="RefSeq" id="WP_001005810.1">
    <property type="nucleotide sequence ID" value="NC_012125.1"/>
</dbReference>
<dbReference type="SMR" id="C0PWV2"/>
<dbReference type="KEGG" id="sei:SPC_2951"/>
<dbReference type="HOGENOM" id="CLU_002472_4_0_6"/>
<dbReference type="Proteomes" id="UP000001599">
    <property type="component" value="Chromosome"/>
</dbReference>
<dbReference type="GO" id="GO:0005829">
    <property type="term" value="C:cytosol"/>
    <property type="evidence" value="ECO:0007669"/>
    <property type="project" value="TreeGrafter"/>
</dbReference>
<dbReference type="GO" id="GO:0005524">
    <property type="term" value="F:ATP binding"/>
    <property type="evidence" value="ECO:0007669"/>
    <property type="project" value="UniProtKB-UniRule"/>
</dbReference>
<dbReference type="GO" id="GO:0140664">
    <property type="term" value="F:ATP-dependent DNA damage sensor activity"/>
    <property type="evidence" value="ECO:0007669"/>
    <property type="project" value="InterPro"/>
</dbReference>
<dbReference type="GO" id="GO:0003684">
    <property type="term" value="F:damaged DNA binding"/>
    <property type="evidence" value="ECO:0007669"/>
    <property type="project" value="UniProtKB-UniRule"/>
</dbReference>
<dbReference type="GO" id="GO:0030983">
    <property type="term" value="F:mismatched DNA binding"/>
    <property type="evidence" value="ECO:0007669"/>
    <property type="project" value="InterPro"/>
</dbReference>
<dbReference type="GO" id="GO:0006298">
    <property type="term" value="P:mismatch repair"/>
    <property type="evidence" value="ECO:0007669"/>
    <property type="project" value="UniProtKB-UniRule"/>
</dbReference>
<dbReference type="CDD" id="cd03284">
    <property type="entry name" value="ABC_MutS1"/>
    <property type="match status" value="1"/>
</dbReference>
<dbReference type="FunFam" id="1.10.1420.10:FF:000002">
    <property type="entry name" value="DNA mismatch repair protein MutS"/>
    <property type="match status" value="1"/>
</dbReference>
<dbReference type="FunFam" id="3.30.420.110:FF:000001">
    <property type="entry name" value="DNA mismatch repair protein MutS"/>
    <property type="match status" value="1"/>
</dbReference>
<dbReference type="FunFam" id="3.40.1170.10:FF:000001">
    <property type="entry name" value="DNA mismatch repair protein MutS"/>
    <property type="match status" value="1"/>
</dbReference>
<dbReference type="FunFam" id="3.40.50.300:FF:000283">
    <property type="entry name" value="DNA mismatch repair protein MutS"/>
    <property type="match status" value="1"/>
</dbReference>
<dbReference type="Gene3D" id="1.10.1420.10">
    <property type="match status" value="2"/>
</dbReference>
<dbReference type="Gene3D" id="6.10.140.430">
    <property type="match status" value="1"/>
</dbReference>
<dbReference type="Gene3D" id="3.40.1170.10">
    <property type="entry name" value="DNA repair protein MutS, domain I"/>
    <property type="match status" value="1"/>
</dbReference>
<dbReference type="Gene3D" id="3.30.420.110">
    <property type="entry name" value="MutS, connector domain"/>
    <property type="match status" value="1"/>
</dbReference>
<dbReference type="Gene3D" id="3.40.50.300">
    <property type="entry name" value="P-loop containing nucleotide triphosphate hydrolases"/>
    <property type="match status" value="1"/>
</dbReference>
<dbReference type="HAMAP" id="MF_00096">
    <property type="entry name" value="MutS"/>
    <property type="match status" value="1"/>
</dbReference>
<dbReference type="InterPro" id="IPR005748">
    <property type="entry name" value="DNA_mismatch_repair_MutS"/>
</dbReference>
<dbReference type="InterPro" id="IPR007695">
    <property type="entry name" value="DNA_mismatch_repair_MutS-lik_N"/>
</dbReference>
<dbReference type="InterPro" id="IPR017261">
    <property type="entry name" value="DNA_mismatch_repair_MutS/MSH"/>
</dbReference>
<dbReference type="InterPro" id="IPR000432">
    <property type="entry name" value="DNA_mismatch_repair_MutS_C"/>
</dbReference>
<dbReference type="InterPro" id="IPR007861">
    <property type="entry name" value="DNA_mismatch_repair_MutS_clamp"/>
</dbReference>
<dbReference type="InterPro" id="IPR007696">
    <property type="entry name" value="DNA_mismatch_repair_MutS_core"/>
</dbReference>
<dbReference type="InterPro" id="IPR016151">
    <property type="entry name" value="DNA_mismatch_repair_MutS_N"/>
</dbReference>
<dbReference type="InterPro" id="IPR036187">
    <property type="entry name" value="DNA_mismatch_repair_MutS_sf"/>
</dbReference>
<dbReference type="InterPro" id="IPR007860">
    <property type="entry name" value="DNA_mmatch_repair_MutS_con_dom"/>
</dbReference>
<dbReference type="InterPro" id="IPR045076">
    <property type="entry name" value="MutS"/>
</dbReference>
<dbReference type="InterPro" id="IPR036678">
    <property type="entry name" value="MutS_con_dom_sf"/>
</dbReference>
<dbReference type="InterPro" id="IPR027417">
    <property type="entry name" value="P-loop_NTPase"/>
</dbReference>
<dbReference type="NCBIfam" id="TIGR01070">
    <property type="entry name" value="mutS1"/>
    <property type="match status" value="1"/>
</dbReference>
<dbReference type="NCBIfam" id="NF003810">
    <property type="entry name" value="PRK05399.1"/>
    <property type="match status" value="1"/>
</dbReference>
<dbReference type="PANTHER" id="PTHR11361:SF34">
    <property type="entry name" value="DNA MISMATCH REPAIR PROTEIN MSH1, MITOCHONDRIAL"/>
    <property type="match status" value="1"/>
</dbReference>
<dbReference type="PANTHER" id="PTHR11361">
    <property type="entry name" value="DNA MISMATCH REPAIR PROTEIN MUTS FAMILY MEMBER"/>
    <property type="match status" value="1"/>
</dbReference>
<dbReference type="Pfam" id="PF01624">
    <property type="entry name" value="MutS_I"/>
    <property type="match status" value="1"/>
</dbReference>
<dbReference type="Pfam" id="PF05188">
    <property type="entry name" value="MutS_II"/>
    <property type="match status" value="1"/>
</dbReference>
<dbReference type="Pfam" id="PF05192">
    <property type="entry name" value="MutS_III"/>
    <property type="match status" value="1"/>
</dbReference>
<dbReference type="Pfam" id="PF05190">
    <property type="entry name" value="MutS_IV"/>
    <property type="match status" value="1"/>
</dbReference>
<dbReference type="Pfam" id="PF00488">
    <property type="entry name" value="MutS_V"/>
    <property type="match status" value="1"/>
</dbReference>
<dbReference type="PIRSF" id="PIRSF037677">
    <property type="entry name" value="DNA_mis_repair_Msh6"/>
    <property type="match status" value="1"/>
</dbReference>
<dbReference type="SMART" id="SM00534">
    <property type="entry name" value="MUTSac"/>
    <property type="match status" value="1"/>
</dbReference>
<dbReference type="SMART" id="SM00533">
    <property type="entry name" value="MUTSd"/>
    <property type="match status" value="1"/>
</dbReference>
<dbReference type="SUPFAM" id="SSF55271">
    <property type="entry name" value="DNA repair protein MutS, domain I"/>
    <property type="match status" value="1"/>
</dbReference>
<dbReference type="SUPFAM" id="SSF53150">
    <property type="entry name" value="DNA repair protein MutS, domain II"/>
    <property type="match status" value="1"/>
</dbReference>
<dbReference type="SUPFAM" id="SSF48334">
    <property type="entry name" value="DNA repair protein MutS, domain III"/>
    <property type="match status" value="1"/>
</dbReference>
<dbReference type="SUPFAM" id="SSF52540">
    <property type="entry name" value="P-loop containing nucleoside triphosphate hydrolases"/>
    <property type="match status" value="1"/>
</dbReference>
<dbReference type="PROSITE" id="PS00486">
    <property type="entry name" value="DNA_MISMATCH_REPAIR_2"/>
    <property type="match status" value="1"/>
</dbReference>
<name>MUTS_SALPC</name>
<keyword id="KW-0067">ATP-binding</keyword>
<keyword id="KW-0227">DNA damage</keyword>
<keyword id="KW-0234">DNA repair</keyword>
<keyword id="KW-0238">DNA-binding</keyword>
<keyword id="KW-0547">Nucleotide-binding</keyword>
<proteinExistence type="inferred from homology"/>
<organism>
    <name type="scientific">Salmonella paratyphi C (strain RKS4594)</name>
    <dbReference type="NCBI Taxonomy" id="476213"/>
    <lineage>
        <taxon>Bacteria</taxon>
        <taxon>Pseudomonadati</taxon>
        <taxon>Pseudomonadota</taxon>
        <taxon>Gammaproteobacteria</taxon>
        <taxon>Enterobacterales</taxon>
        <taxon>Enterobacteriaceae</taxon>
        <taxon>Salmonella</taxon>
    </lineage>
</organism>
<accession>C0PWV2</accession>